<name>ATG7_LODEL</name>
<evidence type="ECO:0000250" key="1"/>
<evidence type="ECO:0000305" key="2"/>
<accession>A5E0T7</accession>
<keyword id="KW-0072">Autophagy</keyword>
<keyword id="KW-0963">Cytoplasm</keyword>
<keyword id="KW-0653">Protein transport</keyword>
<keyword id="KW-1185">Reference proteome</keyword>
<keyword id="KW-0813">Transport</keyword>
<keyword id="KW-0833">Ubl conjugation pathway</keyword>
<reference key="1">
    <citation type="journal article" date="2009" name="Nature">
        <title>Evolution of pathogenicity and sexual reproduction in eight Candida genomes.</title>
        <authorList>
            <person name="Butler G."/>
            <person name="Rasmussen M.D."/>
            <person name="Lin M.F."/>
            <person name="Santos M.A.S."/>
            <person name="Sakthikumar S."/>
            <person name="Munro C.A."/>
            <person name="Rheinbay E."/>
            <person name="Grabherr M."/>
            <person name="Forche A."/>
            <person name="Reedy J.L."/>
            <person name="Agrafioti I."/>
            <person name="Arnaud M.B."/>
            <person name="Bates S."/>
            <person name="Brown A.J.P."/>
            <person name="Brunke S."/>
            <person name="Costanzo M.C."/>
            <person name="Fitzpatrick D.A."/>
            <person name="de Groot P.W.J."/>
            <person name="Harris D."/>
            <person name="Hoyer L.L."/>
            <person name="Hube B."/>
            <person name="Klis F.M."/>
            <person name="Kodira C."/>
            <person name="Lennard N."/>
            <person name="Logue M.E."/>
            <person name="Martin R."/>
            <person name="Neiman A.M."/>
            <person name="Nikolaou E."/>
            <person name="Quail M.A."/>
            <person name="Quinn J."/>
            <person name="Santos M.C."/>
            <person name="Schmitzberger F.F."/>
            <person name="Sherlock G."/>
            <person name="Shah P."/>
            <person name="Silverstein K.A.T."/>
            <person name="Skrzypek M.S."/>
            <person name="Soll D."/>
            <person name="Staggs R."/>
            <person name="Stansfield I."/>
            <person name="Stumpf M.P.H."/>
            <person name="Sudbery P.E."/>
            <person name="Srikantha T."/>
            <person name="Zeng Q."/>
            <person name="Berman J."/>
            <person name="Berriman M."/>
            <person name="Heitman J."/>
            <person name="Gow N.A.R."/>
            <person name="Lorenz M.C."/>
            <person name="Birren B.W."/>
            <person name="Kellis M."/>
            <person name="Cuomo C.A."/>
        </authorList>
    </citation>
    <scope>NUCLEOTIDE SEQUENCE [LARGE SCALE GENOMIC DNA]</scope>
    <source>
        <strain>ATCC 11503 / BCRC 21390 / CBS 2605 / JCM 1781 / NBRC 1676 / NRRL YB-4239</strain>
    </source>
</reference>
<comment type="function">
    <text evidence="1">E1-like activating enzyme involved in the 2 ubiquitin-like systems required for cytoplasm to vacuole transport (Cvt) and autophagy. Activates ATG12 for its conjugation with ATG5 and ATG8 for its conjugation with phosphatidylethanolamine. Both systems are needed for the ATG8 association to Cvt vesicles and autophagosomes membranes. Autophagy is essential for maintenance of amino acid levels and protein synthesis under nitrogen starvation. Required for selective autophagic degradation of the nucleus (nucleophagy) as well as for mitophagy which contributes to regulate mitochondrial quantity and quality by eliminating the mitochondria to a basal level to fulfill cellular energy requirements and preventing excess ROS production. Plays a role in the regulation of filamentous growth and chronological longevity (By similarity).</text>
</comment>
<comment type="subunit">
    <text evidence="1">Homodimer.</text>
</comment>
<comment type="subcellular location">
    <subcellularLocation>
        <location evidence="1">Cytoplasm</location>
    </subcellularLocation>
    <subcellularLocation>
        <location evidence="1">Preautophagosomal structure</location>
    </subcellularLocation>
</comment>
<comment type="domain">
    <text evidence="1">The GxGxxG motif is important for the function, possibly through binding with ATP.</text>
</comment>
<comment type="similarity">
    <text evidence="2">Belongs to the ATG7 family.</text>
</comment>
<protein>
    <recommendedName>
        <fullName>Ubiquitin-like modifier-activating enzyme ATG7</fullName>
    </recommendedName>
    <alternativeName>
        <fullName>ATG12-activating enzyme E1 ATG7</fullName>
    </alternativeName>
    <alternativeName>
        <fullName>Autophagy-related protein 7</fullName>
    </alternativeName>
</protein>
<sequence>MGSDLNTLRFTPIQSFVDSSFFAKLARLKLEKFKLDSSTQYICGFQTRPSKLNKFDDIPTLALDEQSFVEEEIGKDSIANDRLITSGSITNLNTIEEFKAISKQDLLHSWGEDLYQQIMANDTFEYKIFQSFKVLSYSDLKKYKFYYWVSFPTLQSSWTILERNDVINSGIQQDIDSQTKYLNGQFYQLREGRLDTQIEDSSNTELVPTFVFLDSCLSQSKRPSAQLKNYLFYLAKKKGYSEIKVIVYRNNAASFLLKLKLQECPDPWKVVGWERTSQGKLGPKLADLGLLSDPTQLASQAVDLNLKLMKWRVAPELDLDIIKQQKVLLLGAGTLGCYVARALLGWGVCNIKFVDSGRVSYSNPVRQPLFNFEDCFSDNGRGMPKASAAANALKKIFPGVNAQGYEIEVPMIGHPITDEQKQGSQYGVLDDLFNQSDVVFLLMDSREARWLPTVMGVAKGKIVINAALGFDSYLVMRHGNISSLKDKLRLGCYFCNDIVAPEDSLSDRTLDQMCTVTRPGAALMASSLAVELLVSILQHPDKSFANAVENNDDRKKHEEKVEKFSKFGACPHQIRGFLNTFSQNKFHIPNYEHCSACSQKVVDQYIQNGWEFVKDCLNNQGYLEELCGLSKVQEEAELAAQQLLEELSFEEKGEIDSEDLDWIN</sequence>
<dbReference type="EMBL" id="CH981527">
    <property type="protein sequence ID" value="EDK45045.1"/>
    <property type="molecule type" value="Genomic_DNA"/>
</dbReference>
<dbReference type="RefSeq" id="XP_001525296.1">
    <property type="nucleotide sequence ID" value="XM_001525246.1"/>
</dbReference>
<dbReference type="SMR" id="A5E0T7"/>
<dbReference type="FunCoup" id="A5E0T7">
    <property type="interactions" value="728"/>
</dbReference>
<dbReference type="STRING" id="379508.A5E0T7"/>
<dbReference type="GeneID" id="5232875"/>
<dbReference type="KEGG" id="lel:PVL30_002720"/>
<dbReference type="VEuPathDB" id="FungiDB:LELG_03224"/>
<dbReference type="eggNOG" id="KOG2337">
    <property type="taxonomic scope" value="Eukaryota"/>
</dbReference>
<dbReference type="HOGENOM" id="CLU_012998_2_1_1"/>
<dbReference type="InParanoid" id="A5E0T7"/>
<dbReference type="OMA" id="RQIWDAI"/>
<dbReference type="OrthoDB" id="338614at2759"/>
<dbReference type="Proteomes" id="UP000001996">
    <property type="component" value="Unassembled WGS sequence"/>
</dbReference>
<dbReference type="GO" id="GO:0005829">
    <property type="term" value="C:cytosol"/>
    <property type="evidence" value="ECO:0007669"/>
    <property type="project" value="EnsemblFungi"/>
</dbReference>
<dbReference type="GO" id="GO:0097632">
    <property type="term" value="C:extrinsic component of phagophore assembly site membrane"/>
    <property type="evidence" value="ECO:0007669"/>
    <property type="project" value="EnsemblFungi"/>
</dbReference>
<dbReference type="GO" id="GO:0019778">
    <property type="term" value="F:Atg12 activating enzyme activity"/>
    <property type="evidence" value="ECO:0007669"/>
    <property type="project" value="EnsemblFungi"/>
</dbReference>
<dbReference type="GO" id="GO:0019779">
    <property type="term" value="F:Atg8 activating enzyme activity"/>
    <property type="evidence" value="ECO:0007669"/>
    <property type="project" value="EnsemblFungi"/>
</dbReference>
<dbReference type="GO" id="GO:0042802">
    <property type="term" value="F:identical protein binding"/>
    <property type="evidence" value="ECO:0007669"/>
    <property type="project" value="EnsemblFungi"/>
</dbReference>
<dbReference type="GO" id="GO:0000045">
    <property type="term" value="P:autophagosome assembly"/>
    <property type="evidence" value="ECO:0007669"/>
    <property type="project" value="TreeGrafter"/>
</dbReference>
<dbReference type="GO" id="GO:0000422">
    <property type="term" value="P:autophagy of mitochondrion"/>
    <property type="evidence" value="ECO:0007669"/>
    <property type="project" value="EnsemblFungi"/>
</dbReference>
<dbReference type="GO" id="GO:0006995">
    <property type="term" value="P:cellular response to nitrogen starvation"/>
    <property type="evidence" value="ECO:0007669"/>
    <property type="project" value="TreeGrafter"/>
</dbReference>
<dbReference type="GO" id="GO:0032258">
    <property type="term" value="P:cytoplasm to vacuole targeting by the Cvt pathway"/>
    <property type="evidence" value="ECO:0007669"/>
    <property type="project" value="EnsemblFungi"/>
</dbReference>
<dbReference type="GO" id="GO:0034727">
    <property type="term" value="P:piecemeal microautophagy of the nucleus"/>
    <property type="evidence" value="ECO:0007669"/>
    <property type="project" value="EnsemblFungi"/>
</dbReference>
<dbReference type="GO" id="GO:0032446">
    <property type="term" value="P:protein modification by small protein conjugation"/>
    <property type="evidence" value="ECO:0007669"/>
    <property type="project" value="EnsemblFungi"/>
</dbReference>
<dbReference type="FunFam" id="3.40.50.720:FF:000243">
    <property type="entry name" value="Ubiquitin-like modifier-activating enzyme ATG7"/>
    <property type="match status" value="1"/>
</dbReference>
<dbReference type="Gene3D" id="3.40.50.720">
    <property type="entry name" value="NAD(P)-binding Rossmann-like Domain"/>
    <property type="match status" value="1"/>
</dbReference>
<dbReference type="Gene3D" id="3.40.140.100">
    <property type="entry name" value="Ubiquitin-like modifier-activating enzyme ATG7 C-terminal domain"/>
    <property type="match status" value="1"/>
</dbReference>
<dbReference type="Gene3D" id="3.40.140.70">
    <property type="entry name" value="Ubiquitin-like modifier-activating enzyme ATG7 N-terminal domain"/>
    <property type="match status" value="1"/>
</dbReference>
<dbReference type="InterPro" id="IPR006285">
    <property type="entry name" value="Atg7"/>
</dbReference>
<dbReference type="InterPro" id="IPR032197">
    <property type="entry name" value="Atg7_N"/>
</dbReference>
<dbReference type="InterPro" id="IPR042522">
    <property type="entry name" value="Atg7_N_1"/>
</dbReference>
<dbReference type="InterPro" id="IPR042523">
    <property type="entry name" value="Atg7_N_2"/>
</dbReference>
<dbReference type="InterPro" id="IPR045886">
    <property type="entry name" value="ThiF/MoeB/HesA"/>
</dbReference>
<dbReference type="InterPro" id="IPR000594">
    <property type="entry name" value="ThiF_NAD_FAD-bd"/>
</dbReference>
<dbReference type="InterPro" id="IPR035985">
    <property type="entry name" value="Ubiquitin-activating_enz"/>
</dbReference>
<dbReference type="NCBIfam" id="TIGR01381">
    <property type="entry name" value="E1_like_apg7"/>
    <property type="match status" value="1"/>
</dbReference>
<dbReference type="PANTHER" id="PTHR10953">
    <property type="entry name" value="UBIQUITIN-ACTIVATING ENZYME E1"/>
    <property type="match status" value="1"/>
</dbReference>
<dbReference type="PANTHER" id="PTHR10953:SF3">
    <property type="entry name" value="UBIQUITIN-LIKE MODIFIER-ACTIVATING ENZYME ATG7"/>
    <property type="match status" value="1"/>
</dbReference>
<dbReference type="Pfam" id="PF16420">
    <property type="entry name" value="ATG7_N"/>
    <property type="match status" value="1"/>
</dbReference>
<dbReference type="Pfam" id="PF00899">
    <property type="entry name" value="ThiF"/>
    <property type="match status" value="1"/>
</dbReference>
<dbReference type="SUPFAM" id="SSF69572">
    <property type="entry name" value="Activating enzymes of the ubiquitin-like proteins"/>
    <property type="match status" value="1"/>
</dbReference>
<proteinExistence type="inferred from homology"/>
<feature type="chain" id="PRO_0000317866" description="Ubiquitin-like modifier-activating enzyme ATG7">
    <location>
        <begin position="1"/>
        <end position="664"/>
    </location>
</feature>
<feature type="short sequence motif" description="GXGXXG motif" evidence="1">
    <location>
        <begin position="331"/>
        <end position="336"/>
    </location>
</feature>
<feature type="active site" description="Glycyl thioester intermediate" evidence="1">
    <location>
        <position position="514"/>
    </location>
</feature>
<gene>
    <name type="primary">ATG7</name>
    <name type="ORF">LELG_03224</name>
</gene>
<organism>
    <name type="scientific">Lodderomyces elongisporus (strain ATCC 11503 / CBS 2605 / JCM 1781 / NBRC 1676 / NRRL YB-4239)</name>
    <name type="common">Yeast</name>
    <name type="synonym">Saccharomyces elongisporus</name>
    <dbReference type="NCBI Taxonomy" id="379508"/>
    <lineage>
        <taxon>Eukaryota</taxon>
        <taxon>Fungi</taxon>
        <taxon>Dikarya</taxon>
        <taxon>Ascomycota</taxon>
        <taxon>Saccharomycotina</taxon>
        <taxon>Pichiomycetes</taxon>
        <taxon>Debaryomycetaceae</taxon>
        <taxon>Candida/Lodderomyces clade</taxon>
        <taxon>Lodderomyces</taxon>
    </lineage>
</organism>